<keyword id="KW-0687">Ribonucleoprotein</keyword>
<keyword id="KW-0689">Ribosomal protein</keyword>
<reference key="1">
    <citation type="journal article" date="2007" name="Genome Res.">
        <title>Lateral gene transfer between obligate intracellular bacteria: evidence from the Rickettsia massiliae genome.</title>
        <authorList>
            <person name="Blanc G."/>
            <person name="Ogata H."/>
            <person name="Robert C."/>
            <person name="Audic S."/>
            <person name="Claverie J.-M."/>
            <person name="Raoult D."/>
        </authorList>
    </citation>
    <scope>NUCLEOTIDE SEQUENCE [LARGE SCALE GENOMIC DNA]</scope>
    <source>
        <strain>Mtu5</strain>
    </source>
</reference>
<name>RS9_RICM5</name>
<protein>
    <recommendedName>
        <fullName evidence="1">Small ribosomal subunit protein uS9</fullName>
    </recommendedName>
    <alternativeName>
        <fullName evidence="2">30S ribosomal protein S9</fullName>
    </alternativeName>
</protein>
<comment type="similarity">
    <text evidence="1">Belongs to the universal ribosomal protein uS9 family.</text>
</comment>
<dbReference type="EMBL" id="CP000683">
    <property type="protein sequence ID" value="ABV84578.1"/>
    <property type="molecule type" value="Genomic_DNA"/>
</dbReference>
<dbReference type="RefSeq" id="WP_012152555.1">
    <property type="nucleotide sequence ID" value="NC_009900.1"/>
</dbReference>
<dbReference type="SMR" id="A8F0Z2"/>
<dbReference type="KEGG" id="rms:RMA_0322"/>
<dbReference type="HOGENOM" id="CLU_046483_2_0_5"/>
<dbReference type="Proteomes" id="UP000001311">
    <property type="component" value="Chromosome"/>
</dbReference>
<dbReference type="GO" id="GO:0022627">
    <property type="term" value="C:cytosolic small ribosomal subunit"/>
    <property type="evidence" value="ECO:0007669"/>
    <property type="project" value="TreeGrafter"/>
</dbReference>
<dbReference type="GO" id="GO:0003723">
    <property type="term" value="F:RNA binding"/>
    <property type="evidence" value="ECO:0007669"/>
    <property type="project" value="TreeGrafter"/>
</dbReference>
<dbReference type="GO" id="GO:0003735">
    <property type="term" value="F:structural constituent of ribosome"/>
    <property type="evidence" value="ECO:0007669"/>
    <property type="project" value="InterPro"/>
</dbReference>
<dbReference type="GO" id="GO:0006412">
    <property type="term" value="P:translation"/>
    <property type="evidence" value="ECO:0007669"/>
    <property type="project" value="UniProtKB-UniRule"/>
</dbReference>
<dbReference type="FunFam" id="3.30.230.10:FF:000001">
    <property type="entry name" value="30S ribosomal protein S9"/>
    <property type="match status" value="1"/>
</dbReference>
<dbReference type="Gene3D" id="3.30.230.10">
    <property type="match status" value="1"/>
</dbReference>
<dbReference type="HAMAP" id="MF_00532_B">
    <property type="entry name" value="Ribosomal_uS9_B"/>
    <property type="match status" value="1"/>
</dbReference>
<dbReference type="InterPro" id="IPR020568">
    <property type="entry name" value="Ribosomal_Su5_D2-typ_SF"/>
</dbReference>
<dbReference type="InterPro" id="IPR000754">
    <property type="entry name" value="Ribosomal_uS9"/>
</dbReference>
<dbReference type="InterPro" id="IPR023035">
    <property type="entry name" value="Ribosomal_uS9_bac/plastid"/>
</dbReference>
<dbReference type="InterPro" id="IPR020574">
    <property type="entry name" value="Ribosomal_uS9_CS"/>
</dbReference>
<dbReference type="InterPro" id="IPR014721">
    <property type="entry name" value="Ribsml_uS5_D2-typ_fold_subgr"/>
</dbReference>
<dbReference type="NCBIfam" id="NF001099">
    <property type="entry name" value="PRK00132.1"/>
    <property type="match status" value="1"/>
</dbReference>
<dbReference type="PANTHER" id="PTHR21569">
    <property type="entry name" value="RIBOSOMAL PROTEIN S9"/>
    <property type="match status" value="1"/>
</dbReference>
<dbReference type="PANTHER" id="PTHR21569:SF1">
    <property type="entry name" value="SMALL RIBOSOMAL SUBUNIT PROTEIN US9M"/>
    <property type="match status" value="1"/>
</dbReference>
<dbReference type="Pfam" id="PF00380">
    <property type="entry name" value="Ribosomal_S9"/>
    <property type="match status" value="1"/>
</dbReference>
<dbReference type="SUPFAM" id="SSF54211">
    <property type="entry name" value="Ribosomal protein S5 domain 2-like"/>
    <property type="match status" value="1"/>
</dbReference>
<dbReference type="PROSITE" id="PS00360">
    <property type="entry name" value="RIBOSOMAL_S9"/>
    <property type="match status" value="1"/>
</dbReference>
<feature type="chain" id="PRO_1000061012" description="Small ribosomal subunit protein uS9">
    <location>
        <begin position="1"/>
        <end position="159"/>
    </location>
</feature>
<sequence>MPELKIKTEKVEKQLTKEPLVLKTPKEKIDNSGKFYATGKRKNAIARVWLKVGKGKIVVNKKTIAQYFPSETYVKTILQPFVLTKTIDQYDVICTVRGGGISGQKGAILHGISKALDKSAPDFHVILRKGGLLTRDSRVVERKKYGQRKARKKTQFSKR</sequence>
<proteinExistence type="inferred from homology"/>
<gene>
    <name evidence="1" type="primary">rpsI</name>
    <name type="ordered locus">RMA_0322</name>
</gene>
<organism>
    <name type="scientific">Rickettsia massiliae (strain Mtu5)</name>
    <dbReference type="NCBI Taxonomy" id="416276"/>
    <lineage>
        <taxon>Bacteria</taxon>
        <taxon>Pseudomonadati</taxon>
        <taxon>Pseudomonadota</taxon>
        <taxon>Alphaproteobacteria</taxon>
        <taxon>Rickettsiales</taxon>
        <taxon>Rickettsiaceae</taxon>
        <taxon>Rickettsieae</taxon>
        <taxon>Rickettsia</taxon>
        <taxon>spotted fever group</taxon>
    </lineage>
</organism>
<accession>A8F0Z2</accession>
<evidence type="ECO:0000255" key="1">
    <source>
        <dbReference type="HAMAP-Rule" id="MF_00532"/>
    </source>
</evidence>
<evidence type="ECO:0000305" key="2"/>